<proteinExistence type="inferred from homology"/>
<name>SYC_LISMO</name>
<organism>
    <name type="scientific">Listeria monocytogenes serovar 1/2a (strain ATCC BAA-679 / EGD-e)</name>
    <dbReference type="NCBI Taxonomy" id="169963"/>
    <lineage>
        <taxon>Bacteria</taxon>
        <taxon>Bacillati</taxon>
        <taxon>Bacillota</taxon>
        <taxon>Bacilli</taxon>
        <taxon>Bacillales</taxon>
        <taxon>Listeriaceae</taxon>
        <taxon>Listeria</taxon>
    </lineage>
</organism>
<dbReference type="EC" id="6.1.1.16" evidence="1"/>
<dbReference type="EMBL" id="AL591974">
    <property type="protein sequence ID" value="CAD00766.1"/>
    <property type="molecule type" value="Genomic_DNA"/>
</dbReference>
<dbReference type="PIR" id="AH1104">
    <property type="entry name" value="AH1104"/>
</dbReference>
<dbReference type="RefSeq" id="NP_463770.1">
    <property type="nucleotide sequence ID" value="NC_003210.1"/>
</dbReference>
<dbReference type="RefSeq" id="WP_003732829.1">
    <property type="nucleotide sequence ID" value="NZ_CP149495.1"/>
</dbReference>
<dbReference type="SMR" id="Q8YAB1"/>
<dbReference type="STRING" id="169963.gene:17592890"/>
<dbReference type="PaxDb" id="169963-lmo0239"/>
<dbReference type="EnsemblBacteria" id="CAD00766">
    <property type="protein sequence ID" value="CAD00766"/>
    <property type="gene ID" value="CAD00766"/>
</dbReference>
<dbReference type="GeneID" id="987258"/>
<dbReference type="KEGG" id="lmo:lmo0239"/>
<dbReference type="PATRIC" id="fig|169963.11.peg.247"/>
<dbReference type="eggNOG" id="COG0215">
    <property type="taxonomic scope" value="Bacteria"/>
</dbReference>
<dbReference type="HOGENOM" id="CLU_013528_0_1_9"/>
<dbReference type="OrthoDB" id="9815130at2"/>
<dbReference type="PhylomeDB" id="Q8YAB1"/>
<dbReference type="BioCyc" id="LMON169963:LMO0239-MONOMER"/>
<dbReference type="Proteomes" id="UP000000817">
    <property type="component" value="Chromosome"/>
</dbReference>
<dbReference type="GO" id="GO:0005737">
    <property type="term" value="C:cytoplasm"/>
    <property type="evidence" value="ECO:0000318"/>
    <property type="project" value="GO_Central"/>
</dbReference>
<dbReference type="GO" id="GO:0005829">
    <property type="term" value="C:cytosol"/>
    <property type="evidence" value="ECO:0000318"/>
    <property type="project" value="GO_Central"/>
</dbReference>
<dbReference type="GO" id="GO:0005524">
    <property type="term" value="F:ATP binding"/>
    <property type="evidence" value="ECO:0000318"/>
    <property type="project" value="GO_Central"/>
</dbReference>
<dbReference type="GO" id="GO:0004817">
    <property type="term" value="F:cysteine-tRNA ligase activity"/>
    <property type="evidence" value="ECO:0000318"/>
    <property type="project" value="GO_Central"/>
</dbReference>
<dbReference type="GO" id="GO:0008270">
    <property type="term" value="F:zinc ion binding"/>
    <property type="evidence" value="ECO:0007669"/>
    <property type="project" value="UniProtKB-UniRule"/>
</dbReference>
<dbReference type="GO" id="GO:0006423">
    <property type="term" value="P:cysteinyl-tRNA aminoacylation"/>
    <property type="evidence" value="ECO:0000318"/>
    <property type="project" value="GO_Central"/>
</dbReference>
<dbReference type="CDD" id="cd00672">
    <property type="entry name" value="CysRS_core"/>
    <property type="match status" value="1"/>
</dbReference>
<dbReference type="FunFam" id="1.20.120.1910:FF:000002">
    <property type="entry name" value="Cysteine--tRNA ligase"/>
    <property type="match status" value="1"/>
</dbReference>
<dbReference type="FunFam" id="3.40.50.620:FF:000009">
    <property type="entry name" value="Cysteine--tRNA ligase"/>
    <property type="match status" value="1"/>
</dbReference>
<dbReference type="Gene3D" id="1.20.120.1910">
    <property type="entry name" value="Cysteine-tRNA ligase, C-terminal anti-codon recognition domain"/>
    <property type="match status" value="1"/>
</dbReference>
<dbReference type="Gene3D" id="3.40.50.620">
    <property type="entry name" value="HUPs"/>
    <property type="match status" value="1"/>
</dbReference>
<dbReference type="HAMAP" id="MF_00041">
    <property type="entry name" value="Cys_tRNA_synth"/>
    <property type="match status" value="1"/>
</dbReference>
<dbReference type="InterPro" id="IPR015803">
    <property type="entry name" value="Cys-tRNA-ligase"/>
</dbReference>
<dbReference type="InterPro" id="IPR015273">
    <property type="entry name" value="Cys-tRNA-synt_Ia_DALR"/>
</dbReference>
<dbReference type="InterPro" id="IPR024909">
    <property type="entry name" value="Cys-tRNA/MSH_ligase"/>
</dbReference>
<dbReference type="InterPro" id="IPR014729">
    <property type="entry name" value="Rossmann-like_a/b/a_fold"/>
</dbReference>
<dbReference type="InterPro" id="IPR032678">
    <property type="entry name" value="tRNA-synt_1_cat_dom"/>
</dbReference>
<dbReference type="InterPro" id="IPR009080">
    <property type="entry name" value="tRNAsynth_Ia_anticodon-bd"/>
</dbReference>
<dbReference type="NCBIfam" id="TIGR00435">
    <property type="entry name" value="cysS"/>
    <property type="match status" value="1"/>
</dbReference>
<dbReference type="PANTHER" id="PTHR10890:SF3">
    <property type="entry name" value="CYSTEINE--TRNA LIGASE, CYTOPLASMIC"/>
    <property type="match status" value="1"/>
</dbReference>
<dbReference type="PANTHER" id="PTHR10890">
    <property type="entry name" value="CYSTEINYL-TRNA SYNTHETASE"/>
    <property type="match status" value="1"/>
</dbReference>
<dbReference type="Pfam" id="PF09190">
    <property type="entry name" value="DALR_2"/>
    <property type="match status" value="1"/>
</dbReference>
<dbReference type="Pfam" id="PF01406">
    <property type="entry name" value="tRNA-synt_1e"/>
    <property type="match status" value="1"/>
</dbReference>
<dbReference type="PRINTS" id="PR00983">
    <property type="entry name" value="TRNASYNTHCYS"/>
</dbReference>
<dbReference type="SMART" id="SM00840">
    <property type="entry name" value="DALR_2"/>
    <property type="match status" value="1"/>
</dbReference>
<dbReference type="SUPFAM" id="SSF47323">
    <property type="entry name" value="Anticodon-binding domain of a subclass of class I aminoacyl-tRNA synthetases"/>
    <property type="match status" value="1"/>
</dbReference>
<dbReference type="SUPFAM" id="SSF52374">
    <property type="entry name" value="Nucleotidylyl transferase"/>
    <property type="match status" value="1"/>
</dbReference>
<feature type="chain" id="PRO_0000159423" description="Cysteine--tRNA ligase">
    <location>
        <begin position="1"/>
        <end position="471"/>
    </location>
</feature>
<feature type="short sequence motif" description="'HIGH' region">
    <location>
        <begin position="31"/>
        <end position="41"/>
    </location>
</feature>
<feature type="short sequence motif" description="'KMSKS' region">
    <location>
        <begin position="266"/>
        <end position="270"/>
    </location>
</feature>
<feature type="binding site" evidence="1">
    <location>
        <position position="29"/>
    </location>
    <ligand>
        <name>Zn(2+)</name>
        <dbReference type="ChEBI" id="CHEBI:29105"/>
    </ligand>
</feature>
<feature type="binding site" evidence="1">
    <location>
        <position position="209"/>
    </location>
    <ligand>
        <name>Zn(2+)</name>
        <dbReference type="ChEBI" id="CHEBI:29105"/>
    </ligand>
</feature>
<feature type="binding site" evidence="1">
    <location>
        <position position="234"/>
    </location>
    <ligand>
        <name>Zn(2+)</name>
        <dbReference type="ChEBI" id="CHEBI:29105"/>
    </ligand>
</feature>
<feature type="binding site" evidence="1">
    <location>
        <position position="238"/>
    </location>
    <ligand>
        <name>Zn(2+)</name>
        <dbReference type="ChEBI" id="CHEBI:29105"/>
    </ligand>
</feature>
<feature type="binding site" evidence="1">
    <location>
        <position position="269"/>
    </location>
    <ligand>
        <name>ATP</name>
        <dbReference type="ChEBI" id="CHEBI:30616"/>
    </ligand>
</feature>
<accession>Q8YAB1</accession>
<reference key="1">
    <citation type="journal article" date="2001" name="Science">
        <title>Comparative genomics of Listeria species.</title>
        <authorList>
            <person name="Glaser P."/>
            <person name="Frangeul L."/>
            <person name="Buchrieser C."/>
            <person name="Rusniok C."/>
            <person name="Amend A."/>
            <person name="Baquero F."/>
            <person name="Berche P."/>
            <person name="Bloecker H."/>
            <person name="Brandt P."/>
            <person name="Chakraborty T."/>
            <person name="Charbit A."/>
            <person name="Chetouani F."/>
            <person name="Couve E."/>
            <person name="de Daruvar A."/>
            <person name="Dehoux P."/>
            <person name="Domann E."/>
            <person name="Dominguez-Bernal G."/>
            <person name="Duchaud E."/>
            <person name="Durant L."/>
            <person name="Dussurget O."/>
            <person name="Entian K.-D."/>
            <person name="Fsihi H."/>
            <person name="Garcia-del Portillo F."/>
            <person name="Garrido P."/>
            <person name="Gautier L."/>
            <person name="Goebel W."/>
            <person name="Gomez-Lopez N."/>
            <person name="Hain T."/>
            <person name="Hauf J."/>
            <person name="Jackson D."/>
            <person name="Jones L.-M."/>
            <person name="Kaerst U."/>
            <person name="Kreft J."/>
            <person name="Kuhn M."/>
            <person name="Kunst F."/>
            <person name="Kurapkat G."/>
            <person name="Madueno E."/>
            <person name="Maitournam A."/>
            <person name="Mata Vicente J."/>
            <person name="Ng E."/>
            <person name="Nedjari H."/>
            <person name="Nordsiek G."/>
            <person name="Novella S."/>
            <person name="de Pablos B."/>
            <person name="Perez-Diaz J.-C."/>
            <person name="Purcell R."/>
            <person name="Remmel B."/>
            <person name="Rose M."/>
            <person name="Schlueter T."/>
            <person name="Simoes N."/>
            <person name="Tierrez A."/>
            <person name="Vazquez-Boland J.-A."/>
            <person name="Voss H."/>
            <person name="Wehland J."/>
            <person name="Cossart P."/>
        </authorList>
    </citation>
    <scope>NUCLEOTIDE SEQUENCE [LARGE SCALE GENOMIC DNA]</scope>
    <source>
        <strain>ATCC BAA-679 / EGD-e</strain>
    </source>
</reference>
<gene>
    <name evidence="1" type="primary">cysS</name>
    <name type="ordered locus">lmo0239</name>
</gene>
<evidence type="ECO:0000255" key="1">
    <source>
        <dbReference type="HAMAP-Rule" id="MF_00041"/>
    </source>
</evidence>
<keyword id="KW-0030">Aminoacyl-tRNA synthetase</keyword>
<keyword id="KW-0067">ATP-binding</keyword>
<keyword id="KW-0963">Cytoplasm</keyword>
<keyword id="KW-0436">Ligase</keyword>
<keyword id="KW-0479">Metal-binding</keyword>
<keyword id="KW-0547">Nucleotide-binding</keyword>
<keyword id="KW-0648">Protein biosynthesis</keyword>
<keyword id="KW-1185">Reference proteome</keyword>
<keyword id="KW-0862">Zinc</keyword>
<comment type="catalytic activity">
    <reaction evidence="1">
        <text>tRNA(Cys) + L-cysteine + ATP = L-cysteinyl-tRNA(Cys) + AMP + diphosphate</text>
        <dbReference type="Rhea" id="RHEA:17773"/>
        <dbReference type="Rhea" id="RHEA-COMP:9661"/>
        <dbReference type="Rhea" id="RHEA-COMP:9679"/>
        <dbReference type="ChEBI" id="CHEBI:30616"/>
        <dbReference type="ChEBI" id="CHEBI:33019"/>
        <dbReference type="ChEBI" id="CHEBI:35235"/>
        <dbReference type="ChEBI" id="CHEBI:78442"/>
        <dbReference type="ChEBI" id="CHEBI:78517"/>
        <dbReference type="ChEBI" id="CHEBI:456215"/>
        <dbReference type="EC" id="6.1.1.16"/>
    </reaction>
</comment>
<comment type="cofactor">
    <cofactor evidence="1">
        <name>Zn(2+)</name>
        <dbReference type="ChEBI" id="CHEBI:29105"/>
    </cofactor>
    <text evidence="1">Binds 1 zinc ion per subunit.</text>
</comment>
<comment type="subunit">
    <text evidence="1">Monomer.</text>
</comment>
<comment type="subcellular location">
    <subcellularLocation>
        <location evidence="1">Cytoplasm</location>
    </subcellularLocation>
</comment>
<comment type="similarity">
    <text evidence="1">Belongs to the class-I aminoacyl-tRNA synthetase family.</text>
</comment>
<protein>
    <recommendedName>
        <fullName evidence="1">Cysteine--tRNA ligase</fullName>
        <ecNumber evidence="1">6.1.1.16</ecNumber>
    </recommendedName>
    <alternativeName>
        <fullName evidence="1">Cysteinyl-tRNA synthetase</fullName>
        <shortName evidence="1">CysRS</shortName>
    </alternativeName>
</protein>
<sequence length="471" mass="54354">MSIQIFNTLKREKQPFKPLKDGEVKMYVCGPTVYNYIHIGNARPIIVFDTVRRYFTYRGYDVKFVSNFTDVDDKLIRAANELKLTVPEVADRFIGAYFDDVDQLNVAKASVNPRVTENMDEIIQMISTLIEKGYAYESAGDVYFQTKKFKDYGKLSGQELSELQHGARVEYNERKQDELDFTLWKAAKPGEIFWESPFGNGRPGWHIECSALAKKYLGDTIDIHAGGQDLVFPHHEDEIAQSEAATGKTFANYWMHNAFLNIDGEKMSKSLGNFITLHDVLKDNDPNVIRFFMLSVHYRKPITLNDAILEDAKNGLERLMIAYQNIDHRIQTDDGEYVEEAHEDEWLEQLTELKQAFEDDMDDDFNTANAITTFHELAKRANIYLAKETVSINVLREFLSMMRLFAEVLGLKLENTQTDSLDDSEVEALIEERLQARNERNFARADEIRDILKEKNIILEDTAQGTRFRRG</sequence>